<feature type="chain" id="PRO_0000095542" description="Ferric uptake regulation protein">
    <location>
        <begin position="1"/>
        <end position="139"/>
    </location>
</feature>
<feature type="region of interest" description="DNA-binding" evidence="1">
    <location>
        <begin position="1"/>
        <end position="83"/>
    </location>
</feature>
<feature type="region of interest" description="Dimerization" evidence="1">
    <location>
        <begin position="84"/>
        <end position="139"/>
    </location>
</feature>
<feature type="binding site" evidence="1">
    <location>
        <position position="32"/>
    </location>
    <ligand>
        <name>Zn(2+)</name>
        <dbReference type="ChEBI" id="CHEBI:29105"/>
    </ligand>
</feature>
<feature type="binding site" evidence="1">
    <location>
        <position position="80"/>
    </location>
    <ligand>
        <name>Zn(2+)</name>
        <dbReference type="ChEBI" id="CHEBI:29105"/>
    </ligand>
</feature>
<feature type="binding site" evidence="1">
    <location>
        <position position="86"/>
    </location>
    <ligand>
        <name>Fe cation</name>
        <dbReference type="ChEBI" id="CHEBI:24875"/>
    </ligand>
</feature>
<feature type="binding site" evidence="1">
    <location>
        <position position="88"/>
    </location>
    <ligand>
        <name>Fe cation</name>
        <dbReference type="ChEBI" id="CHEBI:24875"/>
    </ligand>
</feature>
<feature type="binding site" evidence="1">
    <location>
        <position position="89"/>
    </location>
    <ligand>
        <name>Zn(2+)</name>
        <dbReference type="ChEBI" id="CHEBI:29105"/>
    </ligand>
</feature>
<feature type="binding site" evidence="1">
    <location>
        <position position="92"/>
    </location>
    <ligand>
        <name>Zn(2+)</name>
        <dbReference type="ChEBI" id="CHEBI:29105"/>
    </ligand>
</feature>
<feature type="binding site" evidence="1">
    <location>
        <position position="95"/>
    </location>
    <ligand>
        <name>Zn(2+)</name>
        <dbReference type="ChEBI" id="CHEBI:29105"/>
    </ligand>
</feature>
<feature type="binding site" evidence="1">
    <location>
        <position position="100"/>
    </location>
    <ligand>
        <name>Zn(2+)</name>
        <dbReference type="ChEBI" id="CHEBI:29105"/>
    </ligand>
</feature>
<feature type="binding site" evidence="1">
    <location>
        <position position="107"/>
    </location>
    <ligand>
        <name>Fe cation</name>
        <dbReference type="ChEBI" id="CHEBI:24875"/>
    </ligand>
</feature>
<feature type="binding site" evidence="1">
    <location>
        <position position="124"/>
    </location>
    <ligand>
        <name>Fe cation</name>
        <dbReference type="ChEBI" id="CHEBI:24875"/>
    </ligand>
</feature>
<comment type="function">
    <text evidence="1">Acts as a global negative controlling element, employing Fe(2+) as a cofactor to bind the operator of the repressed genes.</text>
</comment>
<comment type="subunit">
    <text evidence="1">Homodimer.</text>
</comment>
<comment type="subcellular location">
    <subcellularLocation>
        <location evidence="1">Cytoplasm</location>
    </subcellularLocation>
</comment>
<comment type="similarity">
    <text evidence="2">Belongs to the Fur family.</text>
</comment>
<dbReference type="EMBL" id="BX640433">
    <property type="protein sequence ID" value="CAE38778.1"/>
    <property type="molecule type" value="Genomic_DNA"/>
</dbReference>
<dbReference type="RefSeq" id="WP_003814098.1">
    <property type="nucleotide sequence ID" value="NC_002928.3"/>
</dbReference>
<dbReference type="SMR" id="P0A3E5"/>
<dbReference type="GeneID" id="93205280"/>
<dbReference type="KEGG" id="bpa:BPP3494"/>
<dbReference type="HOGENOM" id="CLU_096072_3_3_4"/>
<dbReference type="Proteomes" id="UP000001421">
    <property type="component" value="Chromosome"/>
</dbReference>
<dbReference type="CollecTF" id="EXPREG_00000750"/>
<dbReference type="GO" id="GO:0005829">
    <property type="term" value="C:cytosol"/>
    <property type="evidence" value="ECO:0007669"/>
    <property type="project" value="TreeGrafter"/>
</dbReference>
<dbReference type="GO" id="GO:0032993">
    <property type="term" value="C:protein-DNA complex"/>
    <property type="evidence" value="ECO:0000270"/>
    <property type="project" value="CollecTF"/>
</dbReference>
<dbReference type="GO" id="GO:0001216">
    <property type="term" value="F:DNA-binding transcription activator activity"/>
    <property type="evidence" value="ECO:0000270"/>
    <property type="project" value="CollecTF"/>
</dbReference>
<dbReference type="GO" id="GO:0000976">
    <property type="term" value="F:transcription cis-regulatory region binding"/>
    <property type="evidence" value="ECO:0000270"/>
    <property type="project" value="CollecTF"/>
</dbReference>
<dbReference type="GO" id="GO:0008270">
    <property type="term" value="F:zinc ion binding"/>
    <property type="evidence" value="ECO:0007669"/>
    <property type="project" value="TreeGrafter"/>
</dbReference>
<dbReference type="GO" id="GO:0045892">
    <property type="term" value="P:negative regulation of DNA-templated transcription"/>
    <property type="evidence" value="ECO:0007669"/>
    <property type="project" value="TreeGrafter"/>
</dbReference>
<dbReference type="GO" id="GO:1900705">
    <property type="term" value="P:negative regulation of siderophore biosynthetic process"/>
    <property type="evidence" value="ECO:0007669"/>
    <property type="project" value="TreeGrafter"/>
</dbReference>
<dbReference type="GO" id="GO:0045893">
    <property type="term" value="P:positive regulation of DNA-templated transcription"/>
    <property type="evidence" value="ECO:0000270"/>
    <property type="project" value="CollecTF"/>
</dbReference>
<dbReference type="CDD" id="cd07153">
    <property type="entry name" value="Fur_like"/>
    <property type="match status" value="1"/>
</dbReference>
<dbReference type="FunFam" id="1.10.10.10:FF:000007">
    <property type="entry name" value="Ferric uptake regulation protein"/>
    <property type="match status" value="1"/>
</dbReference>
<dbReference type="FunFam" id="3.30.1490.190:FF:000001">
    <property type="entry name" value="Ferric uptake regulation protein"/>
    <property type="match status" value="1"/>
</dbReference>
<dbReference type="Gene3D" id="3.30.1490.190">
    <property type="match status" value="1"/>
</dbReference>
<dbReference type="Gene3D" id="1.10.10.10">
    <property type="entry name" value="Winged helix-like DNA-binding domain superfamily/Winged helix DNA-binding domain"/>
    <property type="match status" value="1"/>
</dbReference>
<dbReference type="InterPro" id="IPR002481">
    <property type="entry name" value="FUR"/>
</dbReference>
<dbReference type="InterPro" id="IPR043135">
    <property type="entry name" value="Fur_C"/>
</dbReference>
<dbReference type="InterPro" id="IPR036388">
    <property type="entry name" value="WH-like_DNA-bd_sf"/>
</dbReference>
<dbReference type="InterPro" id="IPR036390">
    <property type="entry name" value="WH_DNA-bd_sf"/>
</dbReference>
<dbReference type="NCBIfam" id="NF006999">
    <property type="entry name" value="PRK09462.1"/>
    <property type="match status" value="1"/>
</dbReference>
<dbReference type="PANTHER" id="PTHR33202:SF2">
    <property type="entry name" value="FERRIC UPTAKE REGULATION PROTEIN"/>
    <property type="match status" value="1"/>
</dbReference>
<dbReference type="PANTHER" id="PTHR33202">
    <property type="entry name" value="ZINC UPTAKE REGULATION PROTEIN"/>
    <property type="match status" value="1"/>
</dbReference>
<dbReference type="Pfam" id="PF01475">
    <property type="entry name" value="FUR"/>
    <property type="match status" value="1"/>
</dbReference>
<dbReference type="SUPFAM" id="SSF46785">
    <property type="entry name" value="Winged helix' DNA-binding domain"/>
    <property type="match status" value="1"/>
</dbReference>
<proteinExistence type="inferred from homology"/>
<name>FUR_BORPA</name>
<gene>
    <name type="primary">fur</name>
    <name type="ordered locus">BPP3494</name>
</gene>
<reference key="1">
    <citation type="journal article" date="2003" name="Nat. Genet.">
        <title>Comparative analysis of the genome sequences of Bordetella pertussis, Bordetella parapertussis and Bordetella bronchiseptica.</title>
        <authorList>
            <person name="Parkhill J."/>
            <person name="Sebaihia M."/>
            <person name="Preston A."/>
            <person name="Murphy L.D."/>
            <person name="Thomson N.R."/>
            <person name="Harris D.E."/>
            <person name="Holden M.T.G."/>
            <person name="Churcher C.M."/>
            <person name="Bentley S.D."/>
            <person name="Mungall K.L."/>
            <person name="Cerdeno-Tarraga A.-M."/>
            <person name="Temple L."/>
            <person name="James K.D."/>
            <person name="Harris B."/>
            <person name="Quail M.A."/>
            <person name="Achtman M."/>
            <person name="Atkin R."/>
            <person name="Baker S."/>
            <person name="Basham D."/>
            <person name="Bason N."/>
            <person name="Cherevach I."/>
            <person name="Chillingworth T."/>
            <person name="Collins M."/>
            <person name="Cronin A."/>
            <person name="Davis P."/>
            <person name="Doggett J."/>
            <person name="Feltwell T."/>
            <person name="Goble A."/>
            <person name="Hamlin N."/>
            <person name="Hauser H."/>
            <person name="Holroyd S."/>
            <person name="Jagels K."/>
            <person name="Leather S."/>
            <person name="Moule S."/>
            <person name="Norberczak H."/>
            <person name="O'Neil S."/>
            <person name="Ormond D."/>
            <person name="Price C."/>
            <person name="Rabbinowitsch E."/>
            <person name="Rutter S."/>
            <person name="Sanders M."/>
            <person name="Saunders D."/>
            <person name="Seeger K."/>
            <person name="Sharp S."/>
            <person name="Simmonds M."/>
            <person name="Skelton J."/>
            <person name="Squares R."/>
            <person name="Squares S."/>
            <person name="Stevens K."/>
            <person name="Unwin L."/>
            <person name="Whitehead S."/>
            <person name="Barrell B.G."/>
            <person name="Maskell D.J."/>
        </authorList>
    </citation>
    <scope>NUCLEOTIDE SEQUENCE [LARGE SCALE GENOMIC DNA]</scope>
    <source>
        <strain>12822 / ATCC BAA-587 / NCTC 13253</strain>
    </source>
</reference>
<keyword id="KW-0963">Cytoplasm</keyword>
<keyword id="KW-0238">DNA-binding</keyword>
<keyword id="KW-0408">Iron</keyword>
<keyword id="KW-0479">Metal-binding</keyword>
<keyword id="KW-0678">Repressor</keyword>
<keyword id="KW-0804">Transcription</keyword>
<keyword id="KW-0805">Transcription regulation</keyword>
<keyword id="KW-0862">Zinc</keyword>
<sequence>MSDQSELKNMGLKATFPRLKILDIFRKSDLRHLSAEDVYRALIAENVEIGLATVYRVLTQFEQAGILTRSQFDTGKAVFELNDGDHHDHLICTNCGTVFEFSDPDIEKRQYKVAKDNGFVLESHAMVLYGICGNCQKGR</sequence>
<organism>
    <name type="scientific">Bordetella parapertussis (strain 12822 / ATCC BAA-587 / NCTC 13253)</name>
    <dbReference type="NCBI Taxonomy" id="257311"/>
    <lineage>
        <taxon>Bacteria</taxon>
        <taxon>Pseudomonadati</taxon>
        <taxon>Pseudomonadota</taxon>
        <taxon>Betaproteobacteria</taxon>
        <taxon>Burkholderiales</taxon>
        <taxon>Alcaligenaceae</taxon>
        <taxon>Bordetella</taxon>
    </lineage>
</organism>
<accession>P0A3E5</accession>
<accession>Q45337</accession>
<accession>Q45369</accession>
<accession>Q45765</accession>
<protein>
    <recommendedName>
        <fullName>Ferric uptake regulation protein</fullName>
        <shortName>Ferric uptake regulator</shortName>
    </recommendedName>
</protein>
<evidence type="ECO:0000250" key="1"/>
<evidence type="ECO:0000305" key="2"/>